<reference key="1">
    <citation type="journal article" date="2012" name="PLoS Pathog.">
        <title>Comparative pathogenomics reveals horizontally acquired novel virulence genes in fungi infecting cereal hosts.</title>
        <authorList>
            <person name="Gardiner D.M."/>
            <person name="McDonald M.C."/>
            <person name="Covarelli L."/>
            <person name="Solomon P.S."/>
            <person name="Rusu A.G."/>
            <person name="Marshall M."/>
            <person name="Kazan K."/>
            <person name="Chakraborty S."/>
            <person name="McDonald B.A."/>
            <person name="Manners J.M."/>
        </authorList>
    </citation>
    <scope>NUCLEOTIDE SEQUENCE [LARGE SCALE GENOMIC DNA]</scope>
    <source>
        <strain>CS3096</strain>
    </source>
</reference>
<reference key="2">
    <citation type="journal article" date="2018" name="Mol. Plant Pathol.">
        <title>The cereal pathogen Fusarium pseudograminearum produces a new class of active cytokinins during infection.</title>
        <authorList>
            <person name="Soerensen J.L."/>
            <person name="Benfield A.H."/>
            <person name="Wollenberg R.D."/>
            <person name="Westphal K."/>
            <person name="Wimmer R."/>
            <person name="Nielsen M.R."/>
            <person name="Nielsen K.F."/>
            <person name="Carere J."/>
            <person name="Covarelli L."/>
            <person name="Beccari G."/>
            <person name="Powell J."/>
            <person name="Yamashino T."/>
            <person name="Kogler H."/>
            <person name="Sondergaard T.E."/>
            <person name="Gardiner D.M."/>
        </authorList>
    </citation>
    <scope>GENOME REANNOTATION</scope>
    <scope>FUNCTION</scope>
    <scope>DISRUPTION PHENOTYPE</scope>
    <scope>INDUCTION</scope>
    <scope>PATHWAY</scope>
    <source>
        <strain>CS3096</strain>
    </source>
</reference>
<name>FCK4_FUSPC</name>
<keyword id="KW-1185">Reference proteome</keyword>
<keyword id="KW-0808">Transferase</keyword>
<protein>
    <recommendedName>
        <fullName evidence="2">Probable alcohol acetyltransferase FCK4</fullName>
        <ecNumber evidence="4">2.3.1.-</ecNumber>
    </recommendedName>
    <alternativeName>
        <fullName evidence="2">Cytokinin biosynthesis protein 4</fullName>
    </alternativeName>
</protein>
<feature type="chain" id="PRO_0000442156" description="Probable alcohol acetyltransferase FCK4">
    <location>
        <begin position="1"/>
        <end position="490"/>
    </location>
</feature>
<sequence>MTDSIHGGHPNIIRSCGASESMWTASHALGLYLRVSNIATLTIPTWKAKFKKSSASHFIRTAVVQVMLKQPAMRVGIIGENSKQPRFVALSSVDFSQQVEYAEAPSVDSVARSLEKLLLQPWPNLSKRPGWHVRVFHEPSSADKDVCRLRICLTVHHAIFDGESTARFHTSLIDALNNPDPAVARMMDKSPVVNLTGDCRDYPLTQEELINFTADIFWIASELWNILAPSFLKPFTFQTWAGEPYNPDIQAINIRYLSLNPIVTQAVVKRCREEKTTMTNLLNTLCATSLARRVPLTERQGFVNLTAVSLRPWIPENLHPNKTCMSVCASSHAQDFGPDVLAKIRQAEDATIWELAVKLRQDMKRRTDTMPHNEFSYLLRYAGDWRDIFQARYGKPRRELWTLSNLGSIATPASKGPWELESVLFAQFAPVVSCALAVNAASVEGGDMMVSLVWQDGILETDLVEGVRDDLEMWLLGLGNEGNLGISSSM</sequence>
<proteinExistence type="evidence at transcript level"/>
<evidence type="ECO:0000269" key="1">
    <source>
    </source>
</evidence>
<evidence type="ECO:0000303" key="2">
    <source>
    </source>
</evidence>
<evidence type="ECO:0000305" key="3"/>
<evidence type="ECO:0000305" key="4">
    <source>
    </source>
</evidence>
<gene>
    <name evidence="2" type="primary">FCK4</name>
    <name evidence="2" type="ORF">FPSE_20002</name>
</gene>
<dbReference type="EC" id="2.3.1.-" evidence="4"/>
<dbReference type="EMBL" id="AFNW01000149">
    <property type="status" value="NOT_ANNOTATED_CDS"/>
    <property type="molecule type" value="Genomic_DNA"/>
</dbReference>
<dbReference type="SMR" id="P0DPA5"/>
<dbReference type="Proteomes" id="UP000007978">
    <property type="component" value="Chromosome 3"/>
</dbReference>
<dbReference type="GO" id="GO:0008080">
    <property type="term" value="F:N-acetyltransferase activity"/>
    <property type="evidence" value="ECO:0007669"/>
    <property type="project" value="TreeGrafter"/>
</dbReference>
<dbReference type="Gene3D" id="3.30.559.10">
    <property type="entry name" value="Chloramphenicol acetyltransferase-like domain"/>
    <property type="match status" value="1"/>
</dbReference>
<dbReference type="Gene3D" id="3.30.559.30">
    <property type="entry name" value="Nonribosomal peptide synthetase, condensation domain"/>
    <property type="match status" value="1"/>
</dbReference>
<dbReference type="InterPro" id="IPR052058">
    <property type="entry name" value="Alcohol_O-acetyltransferase"/>
</dbReference>
<dbReference type="InterPro" id="IPR010828">
    <property type="entry name" value="Atf2/Sli1-like"/>
</dbReference>
<dbReference type="InterPro" id="IPR023213">
    <property type="entry name" value="CAT-like_dom_sf"/>
</dbReference>
<dbReference type="PANTHER" id="PTHR28037">
    <property type="entry name" value="ALCOHOL O-ACETYLTRANSFERASE 1-RELATED"/>
    <property type="match status" value="1"/>
</dbReference>
<dbReference type="PANTHER" id="PTHR28037:SF1">
    <property type="entry name" value="ALCOHOL O-ACETYLTRANSFERASE 1-RELATED"/>
    <property type="match status" value="1"/>
</dbReference>
<dbReference type="Pfam" id="PF07247">
    <property type="entry name" value="AATase"/>
    <property type="match status" value="1"/>
</dbReference>
<dbReference type="SUPFAM" id="SSF52777">
    <property type="entry name" value="CoA-dependent acyltransferases"/>
    <property type="match status" value="2"/>
</dbReference>
<accession>P0DPA5</accession>
<comment type="function">
    <text>Probable alcohol acetyltransferase; part of the gene cluster that mediates the biosynthesis of cytokinins such as fusatin, fusatinic acids or 8-oxofusatin, known for their growth promoting and anti-senescence activities toward host plants (PubMed:28802024). FCK1 is a bifunctional enzyme that performs the first steps in the biosynthesis of Fusarium cytokinins (PubMed:28802024). It first condenses adenosine monophosphate (AMP) with dimethylallyl diphosphate (DMAPP) to yield isoprenyl adenosine monophosphate (PubMed:28802024). It then catalyzes the removal of the phosphoribose to produce isopentenylaldehyde (PubMed:28802024). The cytochrome P450 monooxygenase then converts isopentenylaldehyde to trans-zeatin (PubMed:28802024). A condensation step converts trans-zeatin to fusatin which is further modified to produce fusatinic acid (PubMed:28802024). The mechanism for oxidation of fusatin to fusatinic acid remains unknown (PubMed:28802024). 8-oxofusatin could be produced through several pathways, via direct oxygenation of fusatin, or via the 8-oxo-pentenyladenine intermediate which itself must arise from either the prenylation of 8-oxo-AMP by FCK1 and/or oxygenation of isopentenylaldehyde (PubMed:28802024). Both the FCK3 and FCK4 enzymes act downstream of the identified cytokinins to produce yet unidentified compounds (PubMed:28802024).</text>
</comment>
<comment type="pathway">
    <text evidence="1">Secondary metabolite biosynthesis.</text>
</comment>
<comment type="induction">
    <text evidence="1">Expressed during infection of barley and Brachypodium (PubMed:28802024).</text>
</comment>
<comment type="disruption phenotype">
    <text evidence="1">Results in enhanced production of cytokinins (PubMed:28802024).</text>
</comment>
<comment type="similarity">
    <text evidence="3">Belongs to the alcohol acetyltransferase FCK4 family.</text>
</comment>
<organism>
    <name type="scientific">Fusarium pseudograminearum (strain CS3096)</name>
    <name type="common">Wheat and barley crown-rot fungus</name>
    <dbReference type="NCBI Taxonomy" id="1028729"/>
    <lineage>
        <taxon>Eukaryota</taxon>
        <taxon>Fungi</taxon>
        <taxon>Dikarya</taxon>
        <taxon>Ascomycota</taxon>
        <taxon>Pezizomycotina</taxon>
        <taxon>Sordariomycetes</taxon>
        <taxon>Hypocreomycetidae</taxon>
        <taxon>Hypocreales</taxon>
        <taxon>Nectriaceae</taxon>
        <taxon>Fusarium</taxon>
    </lineage>
</organism>